<proteinExistence type="predicted"/>
<evidence type="ECO:0000255" key="1">
    <source>
        <dbReference type="PROSITE-ProRule" id="PRU00080"/>
    </source>
</evidence>
<dbReference type="EMBL" id="AB018112">
    <property type="protein sequence ID" value="BAB10975.1"/>
    <property type="molecule type" value="Genomic_DNA"/>
</dbReference>
<dbReference type="EMBL" id="AB026661">
    <property type="protein sequence ID" value="BAB10975.1"/>
    <property type="status" value="JOINED"/>
    <property type="molecule type" value="Genomic_DNA"/>
</dbReference>
<dbReference type="EMBL" id="CP002688">
    <property type="protein sequence ID" value="AED94056.1"/>
    <property type="molecule type" value="Genomic_DNA"/>
</dbReference>
<dbReference type="RefSeq" id="NP_198469.1">
    <property type="nucleotide sequence ID" value="NM_123011.1"/>
</dbReference>
<dbReference type="PaxDb" id="3702-AT5G36200.1"/>
<dbReference type="EnsemblPlants" id="AT5G36200.1">
    <property type="protein sequence ID" value="AT5G36200.1"/>
    <property type="gene ID" value="AT5G36200"/>
</dbReference>
<dbReference type="GeneID" id="833617"/>
<dbReference type="Gramene" id="AT5G36200.1">
    <property type="protein sequence ID" value="AT5G36200.1"/>
    <property type="gene ID" value="AT5G36200"/>
</dbReference>
<dbReference type="KEGG" id="ath:AT5G36200"/>
<dbReference type="Araport" id="AT5G36200"/>
<dbReference type="TAIR" id="AT5G36200"/>
<dbReference type="HOGENOM" id="CLU_034692_0_0_1"/>
<dbReference type="InParanoid" id="Q9FHK1"/>
<dbReference type="OMA" id="WFAREIN"/>
<dbReference type="PhylomeDB" id="Q9FHK1"/>
<dbReference type="PRO" id="PR:Q9FHK1"/>
<dbReference type="Proteomes" id="UP000006548">
    <property type="component" value="Chromosome 5"/>
</dbReference>
<dbReference type="ExpressionAtlas" id="Q9FHK1">
    <property type="expression patterns" value="baseline"/>
</dbReference>
<dbReference type="GO" id="GO:0009506">
    <property type="term" value="C:plasmodesma"/>
    <property type="evidence" value="ECO:0007005"/>
    <property type="project" value="TAIR"/>
</dbReference>
<dbReference type="CDD" id="cd22157">
    <property type="entry name" value="F-box_AtFBW1-like"/>
    <property type="match status" value="1"/>
</dbReference>
<dbReference type="Gene3D" id="1.20.1280.50">
    <property type="match status" value="1"/>
</dbReference>
<dbReference type="InterPro" id="IPR006527">
    <property type="entry name" value="F-box-assoc_dom_typ1"/>
</dbReference>
<dbReference type="InterPro" id="IPR017451">
    <property type="entry name" value="F-box-assoc_interact_dom"/>
</dbReference>
<dbReference type="InterPro" id="IPR036047">
    <property type="entry name" value="F-box-like_dom_sf"/>
</dbReference>
<dbReference type="InterPro" id="IPR001810">
    <property type="entry name" value="F-box_dom"/>
</dbReference>
<dbReference type="InterPro" id="IPR050796">
    <property type="entry name" value="SCF_F-box_component"/>
</dbReference>
<dbReference type="NCBIfam" id="TIGR01640">
    <property type="entry name" value="F_box_assoc_1"/>
    <property type="match status" value="1"/>
</dbReference>
<dbReference type="PANTHER" id="PTHR31672">
    <property type="entry name" value="BNACNNG10540D PROTEIN"/>
    <property type="match status" value="1"/>
</dbReference>
<dbReference type="PANTHER" id="PTHR31672:SF10">
    <property type="entry name" value="F-BOX DOMAIN-CONTAINING PROTEIN"/>
    <property type="match status" value="1"/>
</dbReference>
<dbReference type="Pfam" id="PF00646">
    <property type="entry name" value="F-box"/>
    <property type="match status" value="1"/>
</dbReference>
<dbReference type="Pfam" id="PF07734">
    <property type="entry name" value="FBA_1"/>
    <property type="match status" value="1"/>
</dbReference>
<dbReference type="SMART" id="SM00256">
    <property type="entry name" value="FBOX"/>
    <property type="match status" value="1"/>
</dbReference>
<dbReference type="SUPFAM" id="SSF81383">
    <property type="entry name" value="F-box domain"/>
    <property type="match status" value="1"/>
</dbReference>
<dbReference type="PROSITE" id="PS50181">
    <property type="entry name" value="FBOX"/>
    <property type="match status" value="1"/>
</dbReference>
<accession>Q9FHK1</accession>
<name>FB263_ARATH</name>
<sequence>MAMSDLPNDLVEEIISRVPVKSIRAVSSTCKNWNTLSNDHSFTRKLFGKTITTKENECLVVMMMDSKVYLMSVNLHRIHKENDDNNIKSSIMHKAKLISLNDDDILNNTYIIFHCNGLLLLLGFTDDGIKLVVTNPHLGQTRWIKPRKANYQFCDKYAIGYEKKKNNSLRTNKMLLFHKESFCFRIYWFEIYNFNSASWNVFYFTRDWELPYSQGVSLKGNTYWFAREINIRGERIDDPPDFLICFDFTTERFGPRLHLPFHSHSDDTVILSSVREEQLAVLIKRFDLWRMEIWVTTKIEPKEVSWNKLFLAVDMIPLITAFQFCNVSFFIDEKKNVVVVLGKDVLNTRNIANIIGNDGYFKQVDLGESTNKYCYPLVCSYVPSSVQIKQATRVMHHHHIVLRAVVRAVRDSDRERKLNNGREHKISRRTRIHERILFRMLKLDEEAIGIRSRSVPRDRYQQGFASSPCRA</sequence>
<organism>
    <name type="scientific">Arabidopsis thaliana</name>
    <name type="common">Mouse-ear cress</name>
    <dbReference type="NCBI Taxonomy" id="3702"/>
    <lineage>
        <taxon>Eukaryota</taxon>
        <taxon>Viridiplantae</taxon>
        <taxon>Streptophyta</taxon>
        <taxon>Embryophyta</taxon>
        <taxon>Tracheophyta</taxon>
        <taxon>Spermatophyta</taxon>
        <taxon>Magnoliopsida</taxon>
        <taxon>eudicotyledons</taxon>
        <taxon>Gunneridae</taxon>
        <taxon>Pentapetalae</taxon>
        <taxon>rosids</taxon>
        <taxon>malvids</taxon>
        <taxon>Brassicales</taxon>
        <taxon>Brassicaceae</taxon>
        <taxon>Camelineae</taxon>
        <taxon>Arabidopsis</taxon>
    </lineage>
</organism>
<gene>
    <name type="ordered locus">At5g36200</name>
    <name type="ORF">MAB16.15</name>
</gene>
<protein>
    <recommendedName>
        <fullName>Putative F-box protein At5g36200</fullName>
    </recommendedName>
</protein>
<reference key="1">
    <citation type="journal article" date="2000" name="DNA Res.">
        <title>Structural analysis of Arabidopsis thaliana chromosome 5. X. Sequence features of the regions of 3,076,755 bp covered by sixty P1 and TAC clones.</title>
        <authorList>
            <person name="Sato S."/>
            <person name="Nakamura Y."/>
            <person name="Kaneko T."/>
            <person name="Katoh T."/>
            <person name="Asamizu E."/>
            <person name="Kotani H."/>
            <person name="Tabata S."/>
        </authorList>
    </citation>
    <scope>NUCLEOTIDE SEQUENCE [LARGE SCALE GENOMIC DNA]</scope>
    <source>
        <strain>cv. Columbia</strain>
    </source>
</reference>
<reference key="2">
    <citation type="submission" date="1999-05" db="EMBL/GenBank/DDBJ databases">
        <title>Structural analysis of Arabidopsis thaliana chromosome 5. XI.</title>
        <authorList>
            <person name="Kaneko T."/>
            <person name="Katoh T."/>
            <person name="Asamizu E."/>
            <person name="Sato S."/>
            <person name="Nakamura Y."/>
            <person name="Kotani H."/>
            <person name="Tabata S."/>
        </authorList>
    </citation>
    <scope>NUCLEOTIDE SEQUENCE [LARGE SCALE GENOMIC DNA]</scope>
    <source>
        <strain>cv. Columbia</strain>
    </source>
</reference>
<reference key="3">
    <citation type="journal article" date="2017" name="Plant J.">
        <title>Araport11: a complete reannotation of the Arabidopsis thaliana reference genome.</title>
        <authorList>
            <person name="Cheng C.Y."/>
            <person name="Krishnakumar V."/>
            <person name="Chan A.P."/>
            <person name="Thibaud-Nissen F."/>
            <person name="Schobel S."/>
            <person name="Town C.D."/>
        </authorList>
    </citation>
    <scope>GENOME REANNOTATION</scope>
    <source>
        <strain>cv. Columbia</strain>
    </source>
</reference>
<keyword id="KW-1185">Reference proteome</keyword>
<feature type="chain" id="PRO_0000283530" description="Putative F-box protein At5g36200">
    <location>
        <begin position="1"/>
        <end position="471"/>
    </location>
</feature>
<feature type="domain" description="F-box" evidence="1">
    <location>
        <begin position="1"/>
        <end position="46"/>
    </location>
</feature>